<organism>
    <name type="scientific">Salmonella typhimurium (strain LT2 / SGSC1412 / ATCC 700720)</name>
    <dbReference type="NCBI Taxonomy" id="99287"/>
    <lineage>
        <taxon>Bacteria</taxon>
        <taxon>Pseudomonadati</taxon>
        <taxon>Pseudomonadota</taxon>
        <taxon>Gammaproteobacteria</taxon>
        <taxon>Enterobacterales</taxon>
        <taxon>Enterobacteriaceae</taxon>
        <taxon>Salmonella</taxon>
    </lineage>
</organism>
<protein>
    <recommendedName>
        <fullName evidence="1">Protoheme IX farnesyltransferase</fullName>
        <ecNumber evidence="1">2.5.1.141</ecNumber>
    </recommendedName>
    <alternativeName>
        <fullName evidence="1">Heme B farnesyltransferase</fullName>
    </alternativeName>
    <alternativeName>
        <fullName evidence="1">Heme O synthase</fullName>
    </alternativeName>
</protein>
<sequence length="296" mass="32390">MMFKQYLQVTKPGIIFGNLISVIGGFLLASKGSIDYPLFIYTLVGVSLVVASGCVFNNYIDRDIDRKMERTKNRVLVKGLISPGVSLVYATLLGIAGFMLLWFGANPLACWLGVMGFVVYVGVYSLYMKRHSVYGTLIGSLSGAAPPVIGYCAVTGDFDSGAAILLAIFSLWQMPHSYAIAIFRFKDYQAANIPVLPVVKGISVAKNHITLYIIAFAVATLMLTLGGYAGYKYLVVAAAVSVWWLGMALRGYKVEDDKVWARKLFGFSIIAITALSIMMSVDFMVPNSQNLLTYVW</sequence>
<comment type="function">
    <text evidence="1">Converts heme B (protoheme IX) to heme O by substitution of the vinyl group on carbon 2 of heme B porphyrin ring with a hydroxyethyl farnesyl side group.</text>
</comment>
<comment type="catalytic activity">
    <reaction evidence="1">
        <text>heme b + (2E,6E)-farnesyl diphosphate + H2O = Fe(II)-heme o + diphosphate</text>
        <dbReference type="Rhea" id="RHEA:28070"/>
        <dbReference type="ChEBI" id="CHEBI:15377"/>
        <dbReference type="ChEBI" id="CHEBI:33019"/>
        <dbReference type="ChEBI" id="CHEBI:60344"/>
        <dbReference type="ChEBI" id="CHEBI:60530"/>
        <dbReference type="ChEBI" id="CHEBI:175763"/>
        <dbReference type="EC" id="2.5.1.141"/>
    </reaction>
</comment>
<comment type="pathway">
    <text evidence="1">Porphyrin-containing compound metabolism; heme O biosynthesis; heme O from protoheme: step 1/1.</text>
</comment>
<comment type="subcellular location">
    <subcellularLocation>
        <location evidence="1">Cell inner membrane</location>
        <topology evidence="1">Multi-pass membrane protein</topology>
    </subcellularLocation>
</comment>
<comment type="miscellaneous">
    <text evidence="1">Carbon 2 of the heme B porphyrin ring is defined according to the Fischer nomenclature.</text>
</comment>
<comment type="similarity">
    <text evidence="1">Belongs to the UbiA prenyltransferase family. Protoheme IX farnesyltransferase subfamily.</text>
</comment>
<gene>
    <name evidence="1" type="primary">cyoE</name>
    <name type="ordered locus">STM0439</name>
</gene>
<keyword id="KW-0997">Cell inner membrane</keyword>
<keyword id="KW-1003">Cell membrane</keyword>
<keyword id="KW-0350">Heme biosynthesis</keyword>
<keyword id="KW-0472">Membrane</keyword>
<keyword id="KW-1185">Reference proteome</keyword>
<keyword id="KW-0808">Transferase</keyword>
<keyword id="KW-0812">Transmembrane</keyword>
<keyword id="KW-1133">Transmembrane helix</keyword>
<evidence type="ECO:0000255" key="1">
    <source>
        <dbReference type="HAMAP-Rule" id="MF_00154"/>
    </source>
</evidence>
<accession>Q8ZRC4</accession>
<reference key="1">
    <citation type="journal article" date="2001" name="Nature">
        <title>Complete genome sequence of Salmonella enterica serovar Typhimurium LT2.</title>
        <authorList>
            <person name="McClelland M."/>
            <person name="Sanderson K.E."/>
            <person name="Spieth J."/>
            <person name="Clifton S.W."/>
            <person name="Latreille P."/>
            <person name="Courtney L."/>
            <person name="Porwollik S."/>
            <person name="Ali J."/>
            <person name="Dante M."/>
            <person name="Du F."/>
            <person name="Hou S."/>
            <person name="Layman D."/>
            <person name="Leonard S."/>
            <person name="Nguyen C."/>
            <person name="Scott K."/>
            <person name="Holmes A."/>
            <person name="Grewal N."/>
            <person name="Mulvaney E."/>
            <person name="Ryan E."/>
            <person name="Sun H."/>
            <person name="Florea L."/>
            <person name="Miller W."/>
            <person name="Stoneking T."/>
            <person name="Nhan M."/>
            <person name="Waterston R."/>
            <person name="Wilson R.K."/>
        </authorList>
    </citation>
    <scope>NUCLEOTIDE SEQUENCE [LARGE SCALE GENOMIC DNA]</scope>
    <source>
        <strain>LT2 / SGSC1412 / ATCC 700720</strain>
    </source>
</reference>
<name>CYOE_SALTY</name>
<dbReference type="EC" id="2.5.1.141" evidence="1"/>
<dbReference type="EMBL" id="AE006468">
    <property type="protein sequence ID" value="AAL19394.1"/>
    <property type="molecule type" value="Genomic_DNA"/>
</dbReference>
<dbReference type="RefSeq" id="NP_459435.1">
    <property type="nucleotide sequence ID" value="NC_003197.2"/>
</dbReference>
<dbReference type="RefSeq" id="WP_000971352.1">
    <property type="nucleotide sequence ID" value="NC_003197.2"/>
</dbReference>
<dbReference type="SMR" id="Q8ZRC4"/>
<dbReference type="STRING" id="99287.STM0439"/>
<dbReference type="PaxDb" id="99287-STM0439"/>
<dbReference type="GeneID" id="1251959"/>
<dbReference type="KEGG" id="stm:STM0439"/>
<dbReference type="PATRIC" id="fig|99287.12.peg.469"/>
<dbReference type="HOGENOM" id="CLU_029631_0_0_6"/>
<dbReference type="OMA" id="TKPGIIM"/>
<dbReference type="PhylomeDB" id="Q8ZRC4"/>
<dbReference type="BioCyc" id="SENT99287:STM0439-MONOMER"/>
<dbReference type="UniPathway" id="UPA00834">
    <property type="reaction ID" value="UER00712"/>
</dbReference>
<dbReference type="Proteomes" id="UP000001014">
    <property type="component" value="Chromosome"/>
</dbReference>
<dbReference type="GO" id="GO:0005886">
    <property type="term" value="C:plasma membrane"/>
    <property type="evidence" value="ECO:0000318"/>
    <property type="project" value="GO_Central"/>
</dbReference>
<dbReference type="GO" id="GO:0008495">
    <property type="term" value="F:protoheme IX farnesyltransferase activity"/>
    <property type="evidence" value="ECO:0000318"/>
    <property type="project" value="GO_Central"/>
</dbReference>
<dbReference type="GO" id="GO:0048034">
    <property type="term" value="P:heme O biosynthetic process"/>
    <property type="evidence" value="ECO:0000318"/>
    <property type="project" value="GO_Central"/>
</dbReference>
<dbReference type="CDD" id="cd13957">
    <property type="entry name" value="PT_UbiA_Cox10"/>
    <property type="match status" value="1"/>
</dbReference>
<dbReference type="FunFam" id="1.10.357.140:FF:000001">
    <property type="entry name" value="Protoheme IX farnesyltransferase"/>
    <property type="match status" value="1"/>
</dbReference>
<dbReference type="Gene3D" id="1.10.357.140">
    <property type="entry name" value="UbiA prenyltransferase"/>
    <property type="match status" value="1"/>
</dbReference>
<dbReference type="HAMAP" id="MF_00154">
    <property type="entry name" value="CyoE_CtaB"/>
    <property type="match status" value="1"/>
</dbReference>
<dbReference type="InterPro" id="IPR006369">
    <property type="entry name" value="Protohaem_IX_farnesylTrfase"/>
</dbReference>
<dbReference type="InterPro" id="IPR000537">
    <property type="entry name" value="UbiA_prenyltransferase"/>
</dbReference>
<dbReference type="InterPro" id="IPR030470">
    <property type="entry name" value="UbiA_prenylTrfase_CS"/>
</dbReference>
<dbReference type="InterPro" id="IPR044878">
    <property type="entry name" value="UbiA_sf"/>
</dbReference>
<dbReference type="NCBIfam" id="TIGR01473">
    <property type="entry name" value="cyoE_ctaB"/>
    <property type="match status" value="1"/>
</dbReference>
<dbReference type="NCBIfam" id="NF003348">
    <property type="entry name" value="PRK04375.1-1"/>
    <property type="match status" value="1"/>
</dbReference>
<dbReference type="PANTHER" id="PTHR43448">
    <property type="entry name" value="PROTOHEME IX FARNESYLTRANSFERASE, MITOCHONDRIAL"/>
    <property type="match status" value="1"/>
</dbReference>
<dbReference type="PANTHER" id="PTHR43448:SF2">
    <property type="entry name" value="PROTOHEME IX FARNESYLTRANSFERASE, MITOCHONDRIAL"/>
    <property type="match status" value="1"/>
</dbReference>
<dbReference type="Pfam" id="PF01040">
    <property type="entry name" value="UbiA"/>
    <property type="match status" value="1"/>
</dbReference>
<dbReference type="SUPFAM" id="SSF82866">
    <property type="entry name" value="Multidrug efflux transporter AcrB transmembrane domain"/>
    <property type="match status" value="1"/>
</dbReference>
<dbReference type="PROSITE" id="PS00943">
    <property type="entry name" value="UBIA"/>
    <property type="match status" value="1"/>
</dbReference>
<feature type="chain" id="PRO_0000326939" description="Protoheme IX farnesyltransferase">
    <location>
        <begin position="1"/>
        <end position="296"/>
    </location>
</feature>
<feature type="topological domain" description="Cytoplasmic" evidence="1">
    <location>
        <begin position="1"/>
        <end position="9"/>
    </location>
</feature>
<feature type="transmembrane region" description="Helical" evidence="1">
    <location>
        <begin position="10"/>
        <end position="28"/>
    </location>
</feature>
<feature type="topological domain" description="Periplasmic" evidence="1">
    <location>
        <begin position="29"/>
        <end position="37"/>
    </location>
</feature>
<feature type="transmembrane region" description="Helical" evidence="1">
    <location>
        <begin position="38"/>
        <end position="56"/>
    </location>
</feature>
<feature type="topological domain" description="Cytoplasmic" evidence="1">
    <location>
        <begin position="57"/>
        <end position="78"/>
    </location>
</feature>
<feature type="transmembrane region" description="Helical" evidence="1">
    <location>
        <begin position="79"/>
        <end position="97"/>
    </location>
</feature>
<feature type="topological domain" description="Periplasmic" evidence="1">
    <location>
        <begin position="98"/>
        <end position="107"/>
    </location>
</feature>
<feature type="transmembrane region" description="Helical" evidence="1">
    <location>
        <begin position="108"/>
        <end position="126"/>
    </location>
</feature>
<feature type="topological domain" description="Cytoplasmic" evidence="1">
    <location>
        <begin position="127"/>
        <end position="197"/>
    </location>
</feature>
<feature type="transmembrane region" description="Helical" evidence="1">
    <location>
        <begin position="198"/>
        <end position="216"/>
    </location>
</feature>
<feature type="topological domain" description="Periplasmic" evidence="1">
    <location>
        <begin position="217"/>
        <end position="228"/>
    </location>
</feature>
<feature type="transmembrane region" description="Helical" evidence="1">
    <location>
        <begin position="229"/>
        <end position="247"/>
    </location>
</feature>
<feature type="topological domain" description="Cytoplasmic" evidence="1">
    <location>
        <begin position="248"/>
        <end position="268"/>
    </location>
</feature>
<feature type="transmembrane region" description="Helical" evidence="1">
    <location>
        <begin position="269"/>
        <end position="287"/>
    </location>
</feature>
<feature type="topological domain" description="Periplasmic" evidence="1">
    <location>
        <begin position="288"/>
        <end position="296"/>
    </location>
</feature>
<proteinExistence type="inferred from homology"/>